<dbReference type="EMBL" id="BC109571">
    <property type="protein sequence ID" value="AAI09572.1"/>
    <property type="molecule type" value="mRNA"/>
</dbReference>
<dbReference type="RefSeq" id="NP_001035650.1">
    <property type="nucleotide sequence ID" value="NM_001040560.2"/>
</dbReference>
<dbReference type="SMR" id="Q2TBW5"/>
<dbReference type="FunCoup" id="Q2TBW5">
    <property type="interactions" value="903"/>
</dbReference>
<dbReference type="STRING" id="9913.ENSBTAP00000006686"/>
<dbReference type="PaxDb" id="9913-ENSBTAP00000006686"/>
<dbReference type="Ensembl" id="ENSBTAT00000096712.1">
    <property type="protein sequence ID" value="ENSBTAP00000084534.1"/>
    <property type="gene ID" value="ENSBTAG00000063864.1"/>
</dbReference>
<dbReference type="Ensembl" id="ENSBTAT00000100058.1">
    <property type="protein sequence ID" value="ENSBTAP00000081884.1"/>
    <property type="gene ID" value="ENSBTAG00000063864.1"/>
</dbReference>
<dbReference type="GeneID" id="539138"/>
<dbReference type="KEGG" id="bta:539138"/>
<dbReference type="CTD" id="741"/>
<dbReference type="VEuPathDB" id="HostDB:ENSBTAG00000005073"/>
<dbReference type="eggNOG" id="KOG4317">
    <property type="taxonomic scope" value="Eukaryota"/>
</dbReference>
<dbReference type="GeneTree" id="ENSGT00390000017147"/>
<dbReference type="HOGENOM" id="CLU_039057_1_0_1"/>
<dbReference type="InParanoid" id="Q2TBW5"/>
<dbReference type="OMA" id="LMPDYKP"/>
<dbReference type="OrthoDB" id="10005492at2759"/>
<dbReference type="TreeFam" id="TF324864"/>
<dbReference type="Proteomes" id="UP000009136">
    <property type="component" value="Chromosome 29"/>
</dbReference>
<dbReference type="Bgee" id="ENSBTAG00000005073">
    <property type="expression patterns" value="Expressed in olfactory segment of nasal mucosa and 105 other cell types or tissues"/>
</dbReference>
<dbReference type="GO" id="GO:0008270">
    <property type="term" value="F:zinc ion binding"/>
    <property type="evidence" value="ECO:0007669"/>
    <property type="project" value="UniProtKB-KW"/>
</dbReference>
<dbReference type="CDD" id="cd23024">
    <property type="entry name" value="zf-HIT_ZNHIT2-3"/>
    <property type="match status" value="1"/>
</dbReference>
<dbReference type="Gene3D" id="3.30.60.190">
    <property type="match status" value="1"/>
</dbReference>
<dbReference type="InterPro" id="IPR007529">
    <property type="entry name" value="Znf_HIT"/>
</dbReference>
<dbReference type="InterPro" id="IPR039646">
    <property type="entry name" value="ZNHIT2"/>
</dbReference>
<dbReference type="PANTHER" id="PTHR15555">
    <property type="entry name" value="ZINC FINGER HIT DOMAIN CONTAINING PROTEIN 2 PROTEIN FON -RELATED"/>
    <property type="match status" value="1"/>
</dbReference>
<dbReference type="PANTHER" id="PTHR15555:SF0">
    <property type="entry name" value="ZINC FINGER HIT DOMAIN-CONTAINING PROTEIN 2"/>
    <property type="match status" value="1"/>
</dbReference>
<dbReference type="Pfam" id="PF04438">
    <property type="entry name" value="zf-HIT"/>
    <property type="match status" value="1"/>
</dbReference>
<dbReference type="SUPFAM" id="SSF144232">
    <property type="entry name" value="HIT/MYND zinc finger-like"/>
    <property type="match status" value="1"/>
</dbReference>
<dbReference type="PROSITE" id="PS51083">
    <property type="entry name" value="ZF_HIT"/>
    <property type="match status" value="1"/>
</dbReference>
<proteinExistence type="evidence at transcript level"/>
<accession>Q2TBW5</accession>
<name>ZNHI2_BOVIN</name>
<organism>
    <name type="scientific">Bos taurus</name>
    <name type="common">Bovine</name>
    <dbReference type="NCBI Taxonomy" id="9913"/>
    <lineage>
        <taxon>Eukaryota</taxon>
        <taxon>Metazoa</taxon>
        <taxon>Chordata</taxon>
        <taxon>Craniata</taxon>
        <taxon>Vertebrata</taxon>
        <taxon>Euteleostomi</taxon>
        <taxon>Mammalia</taxon>
        <taxon>Eutheria</taxon>
        <taxon>Laurasiatheria</taxon>
        <taxon>Artiodactyla</taxon>
        <taxon>Ruminantia</taxon>
        <taxon>Pecora</taxon>
        <taxon>Bovidae</taxon>
        <taxon>Bovinae</taxon>
        <taxon>Bos</taxon>
    </lineage>
</organism>
<reference key="1">
    <citation type="submission" date="2005-11" db="EMBL/GenBank/DDBJ databases">
        <authorList>
            <consortium name="NIH - Mammalian Gene Collection (MGC) project"/>
        </authorList>
    </citation>
    <scope>NUCLEOTIDE SEQUENCE [LARGE SCALE MRNA]</scope>
    <source>
        <strain>Crossbred X Angus</strain>
        <tissue>Liver</tissue>
    </source>
</reference>
<sequence length="399" mass="42819">MEPAGPCGFCPTGEAQPARYTCPRCNVPYCSLRCYRAHGSCAEEFYRDQVLGELRGRSASPSRLATALRRLRQQRETEDEPGDAGLRPGPAPGGLSGLWERLAPAEKVAFERLLSRGEAGRLLPPWRPWWWGRGAGPRLLEELGDAPSGDAEELEPSPARMPPEPVRDEPAAVEQVLGDLPGACPPAVPTRIPALASLSRGRTSPLVRFQLPNVLFAYAHTLALYHGGDEALLSDFCATLLGVSGALGAQQVFASAEEALQAAAHVLEAGEHPPGPLGTRGAMREAARILLGEGPANQKSYTLAALGDLAQTLGRARKQAVAPEERDRLYRARKKCQFLLSWTNENEDALTPLALDCATAHRAHTVAAEDVAALTGELEQLWGGPLPPARRTLIEELPG</sequence>
<keyword id="KW-0007">Acetylation</keyword>
<keyword id="KW-0479">Metal-binding</keyword>
<keyword id="KW-1185">Reference proteome</keyword>
<keyword id="KW-0862">Zinc</keyword>
<keyword id="KW-0863">Zinc-finger</keyword>
<protein>
    <recommendedName>
        <fullName>Zinc finger HIT domain-containing protein 2</fullName>
    </recommendedName>
</protein>
<gene>
    <name type="primary">ZNHIT2</name>
</gene>
<comment type="function">
    <text evidence="1">May act as a bridging factor mediating the interaction between the R2TP/Prefoldin-like (R2TP/PFDL) complex and U5 small nuclear ribonucleoprotein (U5 snRNP) (By similarity). Required for the interaction of R2TP complex subunit RPAP3 and prefoldin-like subunit URI1 with U5 snRNP proteins EFTUD2 and PRPF8 (By similarity). May play a role in regulating the composition of the U5 snRNP complex (By similarity).</text>
</comment>
<comment type="subunit">
    <text evidence="1">Interacts (via HIT-type zinc finger) with RUVBL2 in the presence of ATP or ADP; shows a stronger interaction in the presence of ADP.</text>
</comment>
<evidence type="ECO:0000250" key="1">
    <source>
        <dbReference type="UniProtKB" id="Q9UHR6"/>
    </source>
</evidence>
<evidence type="ECO:0000255" key="2">
    <source>
        <dbReference type="PROSITE-ProRule" id="PRU00453"/>
    </source>
</evidence>
<evidence type="ECO:0000256" key="3">
    <source>
        <dbReference type="SAM" id="MobiDB-lite"/>
    </source>
</evidence>
<feature type="chain" id="PRO_0000282716" description="Zinc finger HIT domain-containing protein 2">
    <location>
        <begin position="1"/>
        <end position="399"/>
    </location>
</feature>
<feature type="zinc finger region" description="HIT-type" evidence="2">
    <location>
        <begin position="7"/>
        <end position="41"/>
    </location>
</feature>
<feature type="region of interest" description="Disordered" evidence="3">
    <location>
        <begin position="71"/>
        <end position="97"/>
    </location>
</feature>
<feature type="region of interest" description="Disordered" evidence="3">
    <location>
        <begin position="141"/>
        <end position="166"/>
    </location>
</feature>
<feature type="binding site" evidence="2">
    <location>
        <position position="7"/>
    </location>
    <ligand>
        <name>Zn(2+)</name>
        <dbReference type="ChEBI" id="CHEBI:29105"/>
        <label>1</label>
    </ligand>
</feature>
<feature type="binding site" evidence="2">
    <location>
        <position position="10"/>
    </location>
    <ligand>
        <name>Zn(2+)</name>
        <dbReference type="ChEBI" id="CHEBI:29105"/>
        <label>1</label>
    </ligand>
</feature>
<feature type="binding site" evidence="2">
    <location>
        <position position="22"/>
    </location>
    <ligand>
        <name>Zn(2+)</name>
        <dbReference type="ChEBI" id="CHEBI:29105"/>
        <label>2</label>
    </ligand>
</feature>
<feature type="binding site" evidence="2">
    <location>
        <position position="25"/>
    </location>
    <ligand>
        <name>Zn(2+)</name>
        <dbReference type="ChEBI" id="CHEBI:29105"/>
        <label>2</label>
    </ligand>
</feature>
<feature type="binding site" evidence="2">
    <location>
        <position position="30"/>
    </location>
    <ligand>
        <name>Zn(2+)</name>
        <dbReference type="ChEBI" id="CHEBI:29105"/>
        <label>1</label>
    </ligand>
</feature>
<feature type="binding site" evidence="2">
    <location>
        <position position="34"/>
    </location>
    <ligand>
        <name>Zn(2+)</name>
        <dbReference type="ChEBI" id="CHEBI:29105"/>
        <label>1</label>
    </ligand>
</feature>
<feature type="binding site" evidence="2">
    <location>
        <position position="38"/>
    </location>
    <ligand>
        <name>Zn(2+)</name>
        <dbReference type="ChEBI" id="CHEBI:29105"/>
        <label>2</label>
    </ligand>
</feature>
<feature type="binding site" evidence="2">
    <location>
        <position position="41"/>
    </location>
    <ligand>
        <name>Zn(2+)</name>
        <dbReference type="ChEBI" id="CHEBI:29105"/>
        <label>2</label>
    </ligand>
</feature>
<feature type="modified residue" description="N-acetylmethionine" evidence="1">
    <location>
        <position position="1"/>
    </location>
</feature>